<proteinExistence type="inferred from homology"/>
<name>COAD_WOLPP</name>
<keyword id="KW-0067">ATP-binding</keyword>
<keyword id="KW-0173">Coenzyme A biosynthesis</keyword>
<keyword id="KW-0963">Cytoplasm</keyword>
<keyword id="KW-0460">Magnesium</keyword>
<keyword id="KW-0547">Nucleotide-binding</keyword>
<keyword id="KW-0548">Nucleotidyltransferase</keyword>
<keyword id="KW-0808">Transferase</keyword>
<comment type="function">
    <text evidence="1">Reversibly transfers an adenylyl group from ATP to 4'-phosphopantetheine, yielding dephospho-CoA (dPCoA) and pyrophosphate.</text>
</comment>
<comment type="catalytic activity">
    <reaction evidence="1">
        <text>(R)-4'-phosphopantetheine + ATP + H(+) = 3'-dephospho-CoA + diphosphate</text>
        <dbReference type="Rhea" id="RHEA:19801"/>
        <dbReference type="ChEBI" id="CHEBI:15378"/>
        <dbReference type="ChEBI" id="CHEBI:30616"/>
        <dbReference type="ChEBI" id="CHEBI:33019"/>
        <dbReference type="ChEBI" id="CHEBI:57328"/>
        <dbReference type="ChEBI" id="CHEBI:61723"/>
        <dbReference type="EC" id="2.7.7.3"/>
    </reaction>
</comment>
<comment type="cofactor">
    <cofactor evidence="1">
        <name>Mg(2+)</name>
        <dbReference type="ChEBI" id="CHEBI:18420"/>
    </cofactor>
</comment>
<comment type="pathway">
    <text evidence="1">Cofactor biosynthesis; coenzyme A biosynthesis; CoA from (R)-pantothenate: step 4/5.</text>
</comment>
<comment type="subunit">
    <text evidence="1">Homohexamer.</text>
</comment>
<comment type="subcellular location">
    <subcellularLocation>
        <location evidence="1">Cytoplasm</location>
    </subcellularLocation>
</comment>
<comment type="similarity">
    <text evidence="1">Belongs to the bacterial CoaD family.</text>
</comment>
<organism>
    <name type="scientific">Wolbachia pipientis subsp. Culex pipiens (strain wPip)</name>
    <dbReference type="NCBI Taxonomy" id="570417"/>
    <lineage>
        <taxon>Bacteria</taxon>
        <taxon>Pseudomonadati</taxon>
        <taxon>Pseudomonadota</taxon>
        <taxon>Alphaproteobacteria</taxon>
        <taxon>Rickettsiales</taxon>
        <taxon>Anaplasmataceae</taxon>
        <taxon>Wolbachieae</taxon>
        <taxon>Wolbachia</taxon>
    </lineage>
</organism>
<dbReference type="EC" id="2.7.7.3" evidence="1"/>
<dbReference type="EMBL" id="AM999887">
    <property type="protein sequence ID" value="CAQ54166.1"/>
    <property type="molecule type" value="Genomic_DNA"/>
</dbReference>
<dbReference type="RefSeq" id="WP_007302835.1">
    <property type="nucleotide sequence ID" value="NC_010981.1"/>
</dbReference>
<dbReference type="SMR" id="B3CMX3"/>
<dbReference type="KEGG" id="wpi:WP0057"/>
<dbReference type="eggNOG" id="COG0669">
    <property type="taxonomic scope" value="Bacteria"/>
</dbReference>
<dbReference type="HOGENOM" id="CLU_100149_0_1_5"/>
<dbReference type="UniPathway" id="UPA00241">
    <property type="reaction ID" value="UER00355"/>
</dbReference>
<dbReference type="Proteomes" id="UP000008814">
    <property type="component" value="Chromosome"/>
</dbReference>
<dbReference type="GO" id="GO:0005737">
    <property type="term" value="C:cytoplasm"/>
    <property type="evidence" value="ECO:0007669"/>
    <property type="project" value="UniProtKB-SubCell"/>
</dbReference>
<dbReference type="GO" id="GO:0005524">
    <property type="term" value="F:ATP binding"/>
    <property type="evidence" value="ECO:0007669"/>
    <property type="project" value="UniProtKB-KW"/>
</dbReference>
<dbReference type="GO" id="GO:0004595">
    <property type="term" value="F:pantetheine-phosphate adenylyltransferase activity"/>
    <property type="evidence" value="ECO:0007669"/>
    <property type="project" value="UniProtKB-UniRule"/>
</dbReference>
<dbReference type="GO" id="GO:0015937">
    <property type="term" value="P:coenzyme A biosynthetic process"/>
    <property type="evidence" value="ECO:0007669"/>
    <property type="project" value="UniProtKB-UniRule"/>
</dbReference>
<dbReference type="CDD" id="cd02163">
    <property type="entry name" value="PPAT"/>
    <property type="match status" value="1"/>
</dbReference>
<dbReference type="Gene3D" id="3.40.50.620">
    <property type="entry name" value="HUPs"/>
    <property type="match status" value="1"/>
</dbReference>
<dbReference type="HAMAP" id="MF_00151">
    <property type="entry name" value="PPAT_bact"/>
    <property type="match status" value="1"/>
</dbReference>
<dbReference type="InterPro" id="IPR004821">
    <property type="entry name" value="Cyt_trans-like"/>
</dbReference>
<dbReference type="InterPro" id="IPR001980">
    <property type="entry name" value="PPAT"/>
</dbReference>
<dbReference type="InterPro" id="IPR014729">
    <property type="entry name" value="Rossmann-like_a/b/a_fold"/>
</dbReference>
<dbReference type="NCBIfam" id="TIGR01510">
    <property type="entry name" value="coaD_prev_kdtB"/>
    <property type="match status" value="1"/>
</dbReference>
<dbReference type="NCBIfam" id="TIGR00125">
    <property type="entry name" value="cyt_tran_rel"/>
    <property type="match status" value="1"/>
</dbReference>
<dbReference type="PANTHER" id="PTHR21342">
    <property type="entry name" value="PHOSPHOPANTETHEINE ADENYLYLTRANSFERASE"/>
    <property type="match status" value="1"/>
</dbReference>
<dbReference type="PANTHER" id="PTHR21342:SF1">
    <property type="entry name" value="PHOSPHOPANTETHEINE ADENYLYLTRANSFERASE"/>
    <property type="match status" value="1"/>
</dbReference>
<dbReference type="Pfam" id="PF01467">
    <property type="entry name" value="CTP_transf_like"/>
    <property type="match status" value="1"/>
</dbReference>
<dbReference type="PRINTS" id="PR01020">
    <property type="entry name" value="LPSBIOSNTHSS"/>
</dbReference>
<dbReference type="SUPFAM" id="SSF52374">
    <property type="entry name" value="Nucleotidylyl transferase"/>
    <property type="match status" value="1"/>
</dbReference>
<sequence length="168" mass="18779">MNISNKIGIYPGTFDPITFGHLDIIKRACKLVDKLIIGVAENVNKHTNFDIRLRTSMAKNEVKGAGIDADIISFNGLLVKFAKEQNASVIIRGLRAVSDFDYEFQMSWVNYKLFPEIETIFLPASEDTQFISSSFVKEIARLGGDVSNFVSKSVQSELINLNRVENGE</sequence>
<feature type="chain" id="PRO_1000096857" description="Phosphopantetheine adenylyltransferase">
    <location>
        <begin position="1"/>
        <end position="168"/>
    </location>
</feature>
<feature type="binding site" evidence="1">
    <location>
        <begin position="13"/>
        <end position="14"/>
    </location>
    <ligand>
        <name>ATP</name>
        <dbReference type="ChEBI" id="CHEBI:30616"/>
    </ligand>
</feature>
<feature type="binding site" evidence="1">
    <location>
        <position position="13"/>
    </location>
    <ligand>
        <name>substrate</name>
    </ligand>
</feature>
<feature type="binding site" evidence="1">
    <location>
        <position position="21"/>
    </location>
    <ligand>
        <name>ATP</name>
        <dbReference type="ChEBI" id="CHEBI:30616"/>
    </ligand>
</feature>
<feature type="binding site" evidence="1">
    <location>
        <position position="45"/>
    </location>
    <ligand>
        <name>substrate</name>
    </ligand>
</feature>
<feature type="binding site" evidence="1">
    <location>
        <position position="78"/>
    </location>
    <ligand>
        <name>substrate</name>
    </ligand>
</feature>
<feature type="binding site" evidence="1">
    <location>
        <position position="92"/>
    </location>
    <ligand>
        <name>substrate</name>
    </ligand>
</feature>
<feature type="binding site" evidence="1">
    <location>
        <begin position="93"/>
        <end position="95"/>
    </location>
    <ligand>
        <name>ATP</name>
        <dbReference type="ChEBI" id="CHEBI:30616"/>
    </ligand>
</feature>
<feature type="binding site" evidence="1">
    <location>
        <position position="103"/>
    </location>
    <ligand>
        <name>ATP</name>
        <dbReference type="ChEBI" id="CHEBI:30616"/>
    </ligand>
</feature>
<feature type="binding site" evidence="1">
    <location>
        <begin position="128"/>
        <end position="134"/>
    </location>
    <ligand>
        <name>ATP</name>
        <dbReference type="ChEBI" id="CHEBI:30616"/>
    </ligand>
</feature>
<feature type="site" description="Transition state stabilizer" evidence="1">
    <location>
        <position position="21"/>
    </location>
</feature>
<protein>
    <recommendedName>
        <fullName evidence="1">Phosphopantetheine adenylyltransferase</fullName>
        <ecNumber evidence="1">2.7.7.3</ecNumber>
    </recommendedName>
    <alternativeName>
        <fullName evidence="1">Dephospho-CoA pyrophosphorylase</fullName>
    </alternativeName>
    <alternativeName>
        <fullName evidence="1">Pantetheine-phosphate adenylyltransferase</fullName>
        <shortName evidence="1">PPAT</shortName>
    </alternativeName>
</protein>
<accession>B3CMX3</accession>
<evidence type="ECO:0000255" key="1">
    <source>
        <dbReference type="HAMAP-Rule" id="MF_00151"/>
    </source>
</evidence>
<reference key="1">
    <citation type="journal article" date="2008" name="Mol. Biol. Evol.">
        <title>Genome evolution of Wolbachia strain wPip from the Culex pipiens group.</title>
        <authorList>
            <person name="Klasson L."/>
            <person name="Walker T."/>
            <person name="Sebaihia M."/>
            <person name="Sanders M.J."/>
            <person name="Quail M.A."/>
            <person name="Lord A."/>
            <person name="Sanders S."/>
            <person name="Earl J."/>
            <person name="O'Neill S.L."/>
            <person name="Thomson N."/>
            <person name="Sinkins S.P."/>
            <person name="Parkhill J."/>
        </authorList>
    </citation>
    <scope>NUCLEOTIDE SEQUENCE [LARGE SCALE GENOMIC DNA]</scope>
    <source>
        <strain>wPip</strain>
    </source>
</reference>
<gene>
    <name evidence="1" type="primary">coaD</name>
    <name type="ordered locus">WP0057</name>
</gene>